<name>UVRA_PSEPK</name>
<evidence type="ECO:0000255" key="1">
    <source>
        <dbReference type="HAMAP-Rule" id="MF_00205"/>
    </source>
</evidence>
<reference key="1">
    <citation type="journal article" date="2002" name="Environ. Microbiol.">
        <title>Complete genome sequence and comparative analysis of the metabolically versatile Pseudomonas putida KT2440.</title>
        <authorList>
            <person name="Nelson K.E."/>
            <person name="Weinel C."/>
            <person name="Paulsen I.T."/>
            <person name="Dodson R.J."/>
            <person name="Hilbert H."/>
            <person name="Martins dos Santos V.A.P."/>
            <person name="Fouts D.E."/>
            <person name="Gill S.R."/>
            <person name="Pop M."/>
            <person name="Holmes M."/>
            <person name="Brinkac L.M."/>
            <person name="Beanan M.J."/>
            <person name="DeBoy R.T."/>
            <person name="Daugherty S.C."/>
            <person name="Kolonay J.F."/>
            <person name="Madupu R."/>
            <person name="Nelson W.C."/>
            <person name="White O."/>
            <person name="Peterson J.D."/>
            <person name="Khouri H.M."/>
            <person name="Hance I."/>
            <person name="Chris Lee P."/>
            <person name="Holtzapple E.K."/>
            <person name="Scanlan D."/>
            <person name="Tran K."/>
            <person name="Moazzez A."/>
            <person name="Utterback T.R."/>
            <person name="Rizzo M."/>
            <person name="Lee K."/>
            <person name="Kosack D."/>
            <person name="Moestl D."/>
            <person name="Wedler H."/>
            <person name="Lauber J."/>
            <person name="Stjepandic D."/>
            <person name="Hoheisel J."/>
            <person name="Straetz M."/>
            <person name="Heim S."/>
            <person name="Kiewitz C."/>
            <person name="Eisen J.A."/>
            <person name="Timmis K.N."/>
            <person name="Duesterhoeft A."/>
            <person name="Tuemmler B."/>
            <person name="Fraser C.M."/>
        </authorList>
    </citation>
    <scope>NUCLEOTIDE SEQUENCE [LARGE SCALE GENOMIC DNA]</scope>
    <source>
        <strain>ATCC 47054 / DSM 6125 / CFBP 8728 / NCIMB 11950 / KT2440</strain>
    </source>
</reference>
<keyword id="KW-0067">ATP-binding</keyword>
<keyword id="KW-0963">Cytoplasm</keyword>
<keyword id="KW-0227">DNA damage</keyword>
<keyword id="KW-0228">DNA excision</keyword>
<keyword id="KW-0234">DNA repair</keyword>
<keyword id="KW-0238">DNA-binding</keyword>
<keyword id="KW-0267">Excision nuclease</keyword>
<keyword id="KW-0479">Metal-binding</keyword>
<keyword id="KW-0547">Nucleotide-binding</keyword>
<keyword id="KW-1185">Reference proteome</keyword>
<keyword id="KW-0677">Repeat</keyword>
<keyword id="KW-0742">SOS response</keyword>
<keyword id="KW-0862">Zinc</keyword>
<keyword id="KW-0863">Zinc-finger</keyword>
<proteinExistence type="inferred from homology"/>
<dbReference type="EMBL" id="AE015451">
    <property type="protein sequence ID" value="AAN66113.1"/>
    <property type="molecule type" value="Genomic_DNA"/>
</dbReference>
<dbReference type="RefSeq" id="NP_742649.1">
    <property type="nucleotide sequence ID" value="NC_002947.4"/>
</dbReference>
<dbReference type="RefSeq" id="WP_010951778.1">
    <property type="nucleotide sequence ID" value="NZ_CP169744.1"/>
</dbReference>
<dbReference type="SMR" id="Q88QK7"/>
<dbReference type="STRING" id="160488.PP_0483"/>
<dbReference type="PaxDb" id="160488-PP_0483"/>
<dbReference type="GeneID" id="83677781"/>
<dbReference type="KEGG" id="ppu:PP_0483"/>
<dbReference type="PATRIC" id="fig|160488.4.peg.515"/>
<dbReference type="eggNOG" id="COG0178">
    <property type="taxonomic scope" value="Bacteria"/>
</dbReference>
<dbReference type="HOGENOM" id="CLU_001370_0_2_6"/>
<dbReference type="OrthoDB" id="9809851at2"/>
<dbReference type="PhylomeDB" id="Q88QK7"/>
<dbReference type="BioCyc" id="PPUT160488:G1G01-530-MONOMER"/>
<dbReference type="Proteomes" id="UP000000556">
    <property type="component" value="Chromosome"/>
</dbReference>
<dbReference type="GO" id="GO:0005737">
    <property type="term" value="C:cytoplasm"/>
    <property type="evidence" value="ECO:0007669"/>
    <property type="project" value="UniProtKB-SubCell"/>
</dbReference>
<dbReference type="GO" id="GO:0009380">
    <property type="term" value="C:excinuclease repair complex"/>
    <property type="evidence" value="ECO:0007669"/>
    <property type="project" value="InterPro"/>
</dbReference>
<dbReference type="GO" id="GO:0005524">
    <property type="term" value="F:ATP binding"/>
    <property type="evidence" value="ECO:0007669"/>
    <property type="project" value="UniProtKB-UniRule"/>
</dbReference>
<dbReference type="GO" id="GO:0016887">
    <property type="term" value="F:ATP hydrolysis activity"/>
    <property type="evidence" value="ECO:0007669"/>
    <property type="project" value="InterPro"/>
</dbReference>
<dbReference type="GO" id="GO:0003677">
    <property type="term" value="F:DNA binding"/>
    <property type="evidence" value="ECO:0007669"/>
    <property type="project" value="UniProtKB-UniRule"/>
</dbReference>
<dbReference type="GO" id="GO:0009381">
    <property type="term" value="F:excinuclease ABC activity"/>
    <property type="evidence" value="ECO:0007669"/>
    <property type="project" value="UniProtKB-UniRule"/>
</dbReference>
<dbReference type="GO" id="GO:0008270">
    <property type="term" value="F:zinc ion binding"/>
    <property type="evidence" value="ECO:0007669"/>
    <property type="project" value="UniProtKB-UniRule"/>
</dbReference>
<dbReference type="GO" id="GO:0006289">
    <property type="term" value="P:nucleotide-excision repair"/>
    <property type="evidence" value="ECO:0007669"/>
    <property type="project" value="UniProtKB-UniRule"/>
</dbReference>
<dbReference type="GO" id="GO:0009432">
    <property type="term" value="P:SOS response"/>
    <property type="evidence" value="ECO:0007669"/>
    <property type="project" value="UniProtKB-UniRule"/>
</dbReference>
<dbReference type="CDD" id="cd03270">
    <property type="entry name" value="ABC_UvrA_I"/>
    <property type="match status" value="1"/>
</dbReference>
<dbReference type="CDD" id="cd03271">
    <property type="entry name" value="ABC_UvrA_II"/>
    <property type="match status" value="1"/>
</dbReference>
<dbReference type="FunFam" id="1.10.8.280:FF:000001">
    <property type="entry name" value="UvrABC system protein A"/>
    <property type="match status" value="1"/>
</dbReference>
<dbReference type="FunFam" id="1.20.1580.10:FF:000002">
    <property type="entry name" value="UvrABC system protein A"/>
    <property type="match status" value="1"/>
</dbReference>
<dbReference type="FunFam" id="1.20.1580.10:FF:000003">
    <property type="entry name" value="UvrABC system protein A"/>
    <property type="match status" value="1"/>
</dbReference>
<dbReference type="FunFam" id="3.30.190.20:FF:000003">
    <property type="entry name" value="UvrABC system protein A"/>
    <property type="match status" value="1"/>
</dbReference>
<dbReference type="Gene3D" id="1.10.8.280">
    <property type="entry name" value="ABC transporter ATPase domain-like"/>
    <property type="match status" value="1"/>
</dbReference>
<dbReference type="Gene3D" id="1.20.1580.10">
    <property type="entry name" value="ABC transporter ATPase like domain"/>
    <property type="match status" value="2"/>
</dbReference>
<dbReference type="Gene3D" id="3.30.1490.20">
    <property type="entry name" value="ATP-grasp fold, A domain"/>
    <property type="match status" value="1"/>
</dbReference>
<dbReference type="Gene3D" id="3.40.50.300">
    <property type="entry name" value="P-loop containing nucleotide triphosphate hydrolases"/>
    <property type="match status" value="2"/>
</dbReference>
<dbReference type="HAMAP" id="MF_00205">
    <property type="entry name" value="UvrA"/>
    <property type="match status" value="1"/>
</dbReference>
<dbReference type="InterPro" id="IPR003439">
    <property type="entry name" value="ABC_transporter-like_ATP-bd"/>
</dbReference>
<dbReference type="InterPro" id="IPR017871">
    <property type="entry name" value="ABC_transporter-like_CS"/>
</dbReference>
<dbReference type="InterPro" id="IPR013815">
    <property type="entry name" value="ATP_grasp_subdomain_1"/>
</dbReference>
<dbReference type="InterPro" id="IPR027417">
    <property type="entry name" value="P-loop_NTPase"/>
</dbReference>
<dbReference type="InterPro" id="IPR004602">
    <property type="entry name" value="UvrA"/>
</dbReference>
<dbReference type="InterPro" id="IPR041552">
    <property type="entry name" value="UvrA_DNA-bd"/>
</dbReference>
<dbReference type="InterPro" id="IPR041102">
    <property type="entry name" value="UvrA_inter"/>
</dbReference>
<dbReference type="NCBIfam" id="NF001503">
    <property type="entry name" value="PRK00349.1"/>
    <property type="match status" value="1"/>
</dbReference>
<dbReference type="NCBIfam" id="TIGR00630">
    <property type="entry name" value="uvra"/>
    <property type="match status" value="1"/>
</dbReference>
<dbReference type="PANTHER" id="PTHR43152">
    <property type="entry name" value="UVRABC SYSTEM PROTEIN A"/>
    <property type="match status" value="1"/>
</dbReference>
<dbReference type="PANTHER" id="PTHR43152:SF3">
    <property type="entry name" value="UVRABC SYSTEM PROTEIN A"/>
    <property type="match status" value="1"/>
</dbReference>
<dbReference type="Pfam" id="PF17755">
    <property type="entry name" value="UvrA_DNA-bind"/>
    <property type="match status" value="1"/>
</dbReference>
<dbReference type="Pfam" id="PF17760">
    <property type="entry name" value="UvrA_inter"/>
    <property type="match status" value="1"/>
</dbReference>
<dbReference type="SUPFAM" id="SSF52540">
    <property type="entry name" value="P-loop containing nucleoside triphosphate hydrolases"/>
    <property type="match status" value="2"/>
</dbReference>
<dbReference type="PROSITE" id="PS00211">
    <property type="entry name" value="ABC_TRANSPORTER_1"/>
    <property type="match status" value="2"/>
</dbReference>
<dbReference type="PROSITE" id="PS50893">
    <property type="entry name" value="ABC_TRANSPORTER_2"/>
    <property type="match status" value="2"/>
</dbReference>
<organism>
    <name type="scientific">Pseudomonas putida (strain ATCC 47054 / DSM 6125 / CFBP 8728 / NCIMB 11950 / KT2440)</name>
    <dbReference type="NCBI Taxonomy" id="160488"/>
    <lineage>
        <taxon>Bacteria</taxon>
        <taxon>Pseudomonadati</taxon>
        <taxon>Pseudomonadota</taxon>
        <taxon>Gammaproteobacteria</taxon>
        <taxon>Pseudomonadales</taxon>
        <taxon>Pseudomonadaceae</taxon>
        <taxon>Pseudomonas</taxon>
    </lineage>
</organism>
<comment type="function">
    <text evidence="1">The UvrABC repair system catalyzes the recognition and processing of DNA lesions. UvrA is an ATPase and a DNA-binding protein. A damage recognition complex composed of 2 UvrA and 2 UvrB subunits scans DNA for abnormalities. When the presence of a lesion has been verified by UvrB, the UvrA molecules dissociate.</text>
</comment>
<comment type="subunit">
    <text evidence="1">Forms a heterotetramer with UvrB during the search for lesions.</text>
</comment>
<comment type="subcellular location">
    <subcellularLocation>
        <location evidence="1">Cytoplasm</location>
    </subcellularLocation>
</comment>
<comment type="similarity">
    <text evidence="1">Belongs to the ABC transporter superfamily. UvrA family.</text>
</comment>
<sequence>MDKILIRGARTHNLKNIDLTLPRDKLIVITGLSGSGKSSLAFDTLYAEGQRRYVESLSAYARQFLSMMEKPDVDTIEGLSPAISIEQKSTSHNPRSTVGTITEIYDYLRLLYARVGTPRCPDHDIPLEAQTISQMVDLVLERPEGSKLMLLAPVVRERKGEHLAVFDELRAQGFVRARVNGKLYELDELPKLDKQKKHSIDVVVDRFKVRADLQQRLAESFETALKLADGIALVAPMDDEQGEETIFSARFACPVCGHAISELEPKLFSFNNPAGACPTCDGLGVKQFFDTKRLVNTELTLAEGAIRGWDRRNVYYFQMLGSLAAHYGFSLEEPFGELSAEHQKVILQGSGKQSVDFKYLNDRGDIVKRSHPFEGIVPNLERRYRETESATVREELAKFLGTQPCPDCRGTRLRREARHVWVGEKTLPAVTNLPIGEASNYFGQLTLTGRRGEIAAKILKEICERLQFLVNVGLDYLTLDRSADTLSGGEAQRIRLASQIGAGLVGVMYILDEPSIGLHQRDNDRLLATLNHLRDLGNTVIVVEHDEDAIRLADYVVDIGPGAGVHGGQIVAEGSPQEVMDHPDSLTGKYLSGRKKIVVPAKRTPRNKKLQLKLKGARGNNLQNVDLEVPIGLLTCVTGVSGSGKSTLINNTLYPLAATALNGASSLEAAPHSSMDGLQHLDKVVDIDQSPIGRTPRSNPATYTGIFTPIRELFSGVPESRSRGYGPGRFSFNVKGGRCEACQGDGLIKVEMHFLPDIYVPCDVCKSKRYNRETLEIKYKGKNIHEVLEMTIEDAREFFDAVPALARKLQTLMDVGLSYIKLGQSATTLSGGEAQRVKLSRELSKRDTGKTLYILDEPTTGLHFADIQQLLDVLHRLRDHGNTVVVIEHNLDVIKTADWLVDLGPEGGSKGGQIIACGTPEELSEMKQSYTGHYLKPLLERDRA</sequence>
<feature type="chain" id="PRO_0000093080" description="UvrABC system protein A">
    <location>
        <begin position="1"/>
        <end position="944"/>
    </location>
</feature>
<feature type="domain" description="ABC transporter 1" evidence="1">
    <location>
        <begin position="309"/>
        <end position="586"/>
    </location>
</feature>
<feature type="domain" description="ABC transporter 2" evidence="1">
    <location>
        <begin position="606"/>
        <end position="936"/>
    </location>
</feature>
<feature type="zinc finger region" description="C4-type" evidence="1">
    <location>
        <begin position="253"/>
        <end position="280"/>
    </location>
</feature>
<feature type="zinc finger region" description="C4-type" evidence="1">
    <location>
        <begin position="739"/>
        <end position="765"/>
    </location>
</feature>
<feature type="binding site" evidence="1">
    <location>
        <begin position="31"/>
        <end position="38"/>
    </location>
    <ligand>
        <name>ATP</name>
        <dbReference type="ChEBI" id="CHEBI:30616"/>
    </ligand>
</feature>
<feature type="binding site" evidence="1">
    <location>
        <begin position="639"/>
        <end position="646"/>
    </location>
    <ligand>
        <name>ATP</name>
        <dbReference type="ChEBI" id="CHEBI:30616"/>
    </ligand>
</feature>
<protein>
    <recommendedName>
        <fullName evidence="1">UvrABC system protein A</fullName>
        <shortName evidence="1">UvrA protein</shortName>
    </recommendedName>
    <alternativeName>
        <fullName evidence="1">Excinuclease ABC subunit A</fullName>
    </alternativeName>
</protein>
<accession>Q88QK7</accession>
<gene>
    <name evidence="1" type="primary">uvrA</name>
    <name type="ordered locus">PP_0483</name>
</gene>